<protein>
    <recommendedName>
        <fullName evidence="1">Single-stranded DNA-binding protein</fullName>
        <shortName evidence="1">SSB</shortName>
    </recommendedName>
</protein>
<keyword id="KW-0238">DNA-binding</keyword>
<feature type="chain" id="PRO_0000096101" description="Single-stranded DNA-binding protein">
    <location>
        <begin position="1"/>
        <end position="156"/>
    </location>
</feature>
<feature type="domain" description="SSB" evidence="1">
    <location>
        <begin position="1"/>
        <end position="104"/>
    </location>
</feature>
<feature type="region of interest" description="Disordered" evidence="2">
    <location>
        <begin position="107"/>
        <end position="156"/>
    </location>
</feature>
<feature type="compositionally biased region" description="Low complexity" evidence="2">
    <location>
        <begin position="112"/>
        <end position="128"/>
    </location>
</feature>
<sequence>MLNRTILVGRLTRDPELRTTQSGVNVASFTLAVNRTFTNAQGEREADFINIIVFKKQAENVNKYLSKGSLAGVDGRLQTRNYENKEGQRVYVTEVIADSIQFLEPKNSNDTQQDLYQQQVQQTRGQSQYSNNKPVKDNPFANANGPIEIDDNDLPF</sequence>
<name>SSB_STAAN</name>
<evidence type="ECO:0000255" key="1">
    <source>
        <dbReference type="HAMAP-Rule" id="MF_00984"/>
    </source>
</evidence>
<evidence type="ECO:0000256" key="2">
    <source>
        <dbReference type="SAM" id="MobiDB-lite"/>
    </source>
</evidence>
<accession>Q99SQ9</accession>
<reference key="1">
    <citation type="journal article" date="2001" name="Lancet">
        <title>Whole genome sequencing of meticillin-resistant Staphylococcus aureus.</title>
        <authorList>
            <person name="Kuroda M."/>
            <person name="Ohta T."/>
            <person name="Uchiyama I."/>
            <person name="Baba T."/>
            <person name="Yuzawa H."/>
            <person name="Kobayashi I."/>
            <person name="Cui L."/>
            <person name="Oguchi A."/>
            <person name="Aoki K."/>
            <person name="Nagai Y."/>
            <person name="Lian J.-Q."/>
            <person name="Ito T."/>
            <person name="Kanamori M."/>
            <person name="Matsumaru H."/>
            <person name="Maruyama A."/>
            <person name="Murakami H."/>
            <person name="Hosoyama A."/>
            <person name="Mizutani-Ui Y."/>
            <person name="Takahashi N.K."/>
            <person name="Sawano T."/>
            <person name="Inoue R."/>
            <person name="Kaito C."/>
            <person name="Sekimizu K."/>
            <person name="Hirakawa H."/>
            <person name="Kuhara S."/>
            <person name="Goto S."/>
            <person name="Yabuzaki J."/>
            <person name="Kanehisa M."/>
            <person name="Yamashita A."/>
            <person name="Oshima K."/>
            <person name="Furuya K."/>
            <person name="Yoshino C."/>
            <person name="Shiba T."/>
            <person name="Hattori M."/>
            <person name="Ogasawara N."/>
            <person name="Hayashi H."/>
            <person name="Hiramatsu K."/>
        </authorList>
    </citation>
    <scope>NUCLEOTIDE SEQUENCE [LARGE SCALE GENOMIC DNA]</scope>
    <source>
        <strain>N315</strain>
    </source>
</reference>
<dbReference type="EMBL" id="BA000018">
    <property type="protein sequence ID" value="BAB43070.1"/>
    <property type="molecule type" value="Genomic_DNA"/>
</dbReference>
<dbReference type="PIR" id="E89988">
    <property type="entry name" value="E89988"/>
</dbReference>
<dbReference type="RefSeq" id="WP_000934759.1">
    <property type="nucleotide sequence ID" value="NC_002745.2"/>
</dbReference>
<dbReference type="SMR" id="Q99SQ9"/>
<dbReference type="EnsemblBacteria" id="BAB43070">
    <property type="protein sequence ID" value="BAB43070"/>
    <property type="gene ID" value="BAB43070"/>
</dbReference>
<dbReference type="KEGG" id="sau:SA1792"/>
<dbReference type="KEGG" id="vg:1260571"/>
<dbReference type="HOGENOM" id="CLU_078758_6_1_9"/>
<dbReference type="GO" id="GO:0009295">
    <property type="term" value="C:nucleoid"/>
    <property type="evidence" value="ECO:0007669"/>
    <property type="project" value="TreeGrafter"/>
</dbReference>
<dbReference type="GO" id="GO:0003697">
    <property type="term" value="F:single-stranded DNA binding"/>
    <property type="evidence" value="ECO:0007669"/>
    <property type="project" value="UniProtKB-UniRule"/>
</dbReference>
<dbReference type="GO" id="GO:0006260">
    <property type="term" value="P:DNA replication"/>
    <property type="evidence" value="ECO:0007669"/>
    <property type="project" value="InterPro"/>
</dbReference>
<dbReference type="CDD" id="cd04496">
    <property type="entry name" value="SSB_OBF"/>
    <property type="match status" value="1"/>
</dbReference>
<dbReference type="FunFam" id="2.40.50.140:FF:000084">
    <property type="entry name" value="Single-stranded DNA-binding protein"/>
    <property type="match status" value="1"/>
</dbReference>
<dbReference type="Gene3D" id="2.40.50.140">
    <property type="entry name" value="Nucleic acid-binding proteins"/>
    <property type="match status" value="1"/>
</dbReference>
<dbReference type="HAMAP" id="MF_00984">
    <property type="entry name" value="SSB"/>
    <property type="match status" value="1"/>
</dbReference>
<dbReference type="InterPro" id="IPR012340">
    <property type="entry name" value="NA-bd_OB-fold"/>
</dbReference>
<dbReference type="InterPro" id="IPR000424">
    <property type="entry name" value="Primosome_PriB/ssb"/>
</dbReference>
<dbReference type="InterPro" id="IPR011344">
    <property type="entry name" value="ssDNA-bd"/>
</dbReference>
<dbReference type="NCBIfam" id="TIGR00621">
    <property type="entry name" value="ssb"/>
    <property type="match status" value="1"/>
</dbReference>
<dbReference type="PANTHER" id="PTHR10302">
    <property type="entry name" value="SINGLE-STRANDED DNA-BINDING PROTEIN"/>
    <property type="match status" value="1"/>
</dbReference>
<dbReference type="PANTHER" id="PTHR10302:SF27">
    <property type="entry name" value="SINGLE-STRANDED DNA-BINDING PROTEIN"/>
    <property type="match status" value="1"/>
</dbReference>
<dbReference type="Pfam" id="PF00436">
    <property type="entry name" value="SSB"/>
    <property type="match status" value="1"/>
</dbReference>
<dbReference type="PIRSF" id="PIRSF002070">
    <property type="entry name" value="SSB"/>
    <property type="match status" value="1"/>
</dbReference>
<dbReference type="SUPFAM" id="SSF50249">
    <property type="entry name" value="Nucleic acid-binding proteins"/>
    <property type="match status" value="1"/>
</dbReference>
<dbReference type="PROSITE" id="PS50935">
    <property type="entry name" value="SSB"/>
    <property type="match status" value="1"/>
</dbReference>
<proteinExistence type="inferred from homology"/>
<gene>
    <name type="primary">ssb</name>
    <name type="ordered locus">SA1792</name>
</gene>
<comment type="subunit">
    <text evidence="1">Homotetramer.</text>
</comment>
<organism>
    <name type="scientific">Staphylococcus aureus (strain N315)</name>
    <dbReference type="NCBI Taxonomy" id="158879"/>
    <lineage>
        <taxon>Bacteria</taxon>
        <taxon>Bacillati</taxon>
        <taxon>Bacillota</taxon>
        <taxon>Bacilli</taxon>
        <taxon>Bacillales</taxon>
        <taxon>Staphylococcaceae</taxon>
        <taxon>Staphylococcus</taxon>
    </lineage>
</organism>